<keyword id="KW-0007">Acetylation</keyword>
<keyword id="KW-0240">DNA-directed RNA polymerase</keyword>
<keyword id="KW-0548">Nucleotidyltransferase</keyword>
<keyword id="KW-0804">Transcription</keyword>
<keyword id="KW-0808">Transferase</keyword>
<protein>
    <recommendedName>
        <fullName evidence="1">DNA-directed RNA polymerase subunit beta</fullName>
        <shortName evidence="1">RNAP subunit beta</shortName>
        <ecNumber evidence="1">2.7.7.6</ecNumber>
    </recommendedName>
    <alternativeName>
        <fullName evidence="1">RNA polymerase subunit beta</fullName>
    </alternativeName>
    <alternativeName>
        <fullName evidence="1">Transcriptase subunit beta</fullName>
    </alternativeName>
</protein>
<accession>B7LUL5</accession>
<feature type="chain" id="PRO_1000141696" description="DNA-directed RNA polymerase subunit beta">
    <location>
        <begin position="1"/>
        <end position="1342"/>
    </location>
</feature>
<feature type="modified residue" description="N6-acetyllysine" evidence="1">
    <location>
        <position position="1022"/>
    </location>
</feature>
<feature type="modified residue" description="N6-acetyllysine" evidence="1">
    <location>
        <position position="1200"/>
    </location>
</feature>
<organism>
    <name type="scientific">Escherichia fergusonii (strain ATCC 35469 / DSM 13698 / CCUG 18766 / IAM 14443 / JCM 21226 / LMG 7866 / NBRC 102419 / NCTC 12128 / CDC 0568-73)</name>
    <dbReference type="NCBI Taxonomy" id="585054"/>
    <lineage>
        <taxon>Bacteria</taxon>
        <taxon>Pseudomonadati</taxon>
        <taxon>Pseudomonadota</taxon>
        <taxon>Gammaproteobacteria</taxon>
        <taxon>Enterobacterales</taxon>
        <taxon>Enterobacteriaceae</taxon>
        <taxon>Escherichia</taxon>
    </lineage>
</organism>
<reference key="1">
    <citation type="journal article" date="2009" name="PLoS Genet.">
        <title>Organised genome dynamics in the Escherichia coli species results in highly diverse adaptive paths.</title>
        <authorList>
            <person name="Touchon M."/>
            <person name="Hoede C."/>
            <person name="Tenaillon O."/>
            <person name="Barbe V."/>
            <person name="Baeriswyl S."/>
            <person name="Bidet P."/>
            <person name="Bingen E."/>
            <person name="Bonacorsi S."/>
            <person name="Bouchier C."/>
            <person name="Bouvet O."/>
            <person name="Calteau A."/>
            <person name="Chiapello H."/>
            <person name="Clermont O."/>
            <person name="Cruveiller S."/>
            <person name="Danchin A."/>
            <person name="Diard M."/>
            <person name="Dossat C."/>
            <person name="Karoui M.E."/>
            <person name="Frapy E."/>
            <person name="Garry L."/>
            <person name="Ghigo J.M."/>
            <person name="Gilles A.M."/>
            <person name="Johnson J."/>
            <person name="Le Bouguenec C."/>
            <person name="Lescat M."/>
            <person name="Mangenot S."/>
            <person name="Martinez-Jehanne V."/>
            <person name="Matic I."/>
            <person name="Nassif X."/>
            <person name="Oztas S."/>
            <person name="Petit M.A."/>
            <person name="Pichon C."/>
            <person name="Rouy Z."/>
            <person name="Ruf C.S."/>
            <person name="Schneider D."/>
            <person name="Tourret J."/>
            <person name="Vacherie B."/>
            <person name="Vallenet D."/>
            <person name="Medigue C."/>
            <person name="Rocha E.P.C."/>
            <person name="Denamur E."/>
        </authorList>
    </citation>
    <scope>NUCLEOTIDE SEQUENCE [LARGE SCALE GENOMIC DNA]</scope>
    <source>
        <strain>ATCC 35469 / DSM 13698 / BCRC 15582 / CCUG 18766 / IAM 14443 / JCM 21226 / LMG 7866 / NBRC 102419 / NCTC 12128 / CDC 0568-73</strain>
    </source>
</reference>
<proteinExistence type="inferred from homology"/>
<comment type="function">
    <text evidence="1">DNA-dependent RNA polymerase catalyzes the transcription of DNA into RNA using the four ribonucleoside triphosphates as substrates.</text>
</comment>
<comment type="catalytic activity">
    <reaction evidence="1">
        <text>RNA(n) + a ribonucleoside 5'-triphosphate = RNA(n+1) + diphosphate</text>
        <dbReference type="Rhea" id="RHEA:21248"/>
        <dbReference type="Rhea" id="RHEA-COMP:14527"/>
        <dbReference type="Rhea" id="RHEA-COMP:17342"/>
        <dbReference type="ChEBI" id="CHEBI:33019"/>
        <dbReference type="ChEBI" id="CHEBI:61557"/>
        <dbReference type="ChEBI" id="CHEBI:140395"/>
        <dbReference type="EC" id="2.7.7.6"/>
    </reaction>
</comment>
<comment type="subunit">
    <text evidence="1">The RNAP catalytic core consists of 2 alpha, 1 beta, 1 beta' and 1 omega subunit. When a sigma factor is associated with the core the holoenzyme is formed, which can initiate transcription.</text>
</comment>
<comment type="similarity">
    <text evidence="1">Belongs to the RNA polymerase beta chain family.</text>
</comment>
<evidence type="ECO:0000255" key="1">
    <source>
        <dbReference type="HAMAP-Rule" id="MF_01321"/>
    </source>
</evidence>
<name>RPOB_ESCF3</name>
<dbReference type="EC" id="2.7.7.6" evidence="1"/>
<dbReference type="EMBL" id="CU928158">
    <property type="protein sequence ID" value="CAQ91218.1"/>
    <property type="molecule type" value="Genomic_DNA"/>
</dbReference>
<dbReference type="RefSeq" id="WP_001353730.1">
    <property type="nucleotide sequence ID" value="NC_011740.1"/>
</dbReference>
<dbReference type="SMR" id="B7LUL5"/>
<dbReference type="GeneID" id="75059371"/>
<dbReference type="KEGG" id="efe:EFER_3767"/>
<dbReference type="HOGENOM" id="CLU_000524_4_1_6"/>
<dbReference type="OrthoDB" id="9803954at2"/>
<dbReference type="Proteomes" id="UP000000745">
    <property type="component" value="Chromosome"/>
</dbReference>
<dbReference type="GO" id="GO:0000428">
    <property type="term" value="C:DNA-directed RNA polymerase complex"/>
    <property type="evidence" value="ECO:0007669"/>
    <property type="project" value="UniProtKB-KW"/>
</dbReference>
<dbReference type="GO" id="GO:0003677">
    <property type="term" value="F:DNA binding"/>
    <property type="evidence" value="ECO:0007669"/>
    <property type="project" value="UniProtKB-UniRule"/>
</dbReference>
<dbReference type="GO" id="GO:0003899">
    <property type="term" value="F:DNA-directed RNA polymerase activity"/>
    <property type="evidence" value="ECO:0007669"/>
    <property type="project" value="UniProtKB-UniRule"/>
</dbReference>
<dbReference type="GO" id="GO:0032549">
    <property type="term" value="F:ribonucleoside binding"/>
    <property type="evidence" value="ECO:0007669"/>
    <property type="project" value="InterPro"/>
</dbReference>
<dbReference type="GO" id="GO:0006351">
    <property type="term" value="P:DNA-templated transcription"/>
    <property type="evidence" value="ECO:0007669"/>
    <property type="project" value="UniProtKB-UniRule"/>
</dbReference>
<dbReference type="CDD" id="cd00653">
    <property type="entry name" value="RNA_pol_B_RPB2"/>
    <property type="match status" value="1"/>
</dbReference>
<dbReference type="FunFam" id="2.30.150.10:FF:000001">
    <property type="entry name" value="DNA-directed RNA polymerase subunit beta"/>
    <property type="match status" value="1"/>
</dbReference>
<dbReference type="FunFam" id="2.40.270.10:FF:000003">
    <property type="entry name" value="DNA-directed RNA polymerase subunit beta"/>
    <property type="match status" value="1"/>
</dbReference>
<dbReference type="FunFam" id="2.40.270.10:FF:000004">
    <property type="entry name" value="DNA-directed RNA polymerase subunit beta"/>
    <property type="match status" value="1"/>
</dbReference>
<dbReference type="FunFam" id="2.40.50.100:FF:000006">
    <property type="entry name" value="DNA-directed RNA polymerase subunit beta"/>
    <property type="match status" value="1"/>
</dbReference>
<dbReference type="FunFam" id="2.40.50.150:FF:000001">
    <property type="entry name" value="DNA-directed RNA polymerase subunit beta"/>
    <property type="match status" value="1"/>
</dbReference>
<dbReference type="FunFam" id="3.90.1100.10:FF:000002">
    <property type="entry name" value="DNA-directed RNA polymerase subunit beta"/>
    <property type="match status" value="1"/>
</dbReference>
<dbReference type="FunFam" id="3.90.1110.10:FF:000001">
    <property type="entry name" value="DNA-directed RNA polymerase subunit beta"/>
    <property type="match status" value="1"/>
</dbReference>
<dbReference type="FunFam" id="3.90.1110.10:FF:000004">
    <property type="entry name" value="DNA-directed RNA polymerase subunit beta"/>
    <property type="match status" value="1"/>
</dbReference>
<dbReference type="FunFam" id="3.90.1800.10:FF:000001">
    <property type="entry name" value="DNA-directed RNA polymerase subunit beta"/>
    <property type="match status" value="1"/>
</dbReference>
<dbReference type="Gene3D" id="2.40.50.100">
    <property type="match status" value="1"/>
</dbReference>
<dbReference type="Gene3D" id="2.40.50.150">
    <property type="match status" value="1"/>
</dbReference>
<dbReference type="Gene3D" id="3.90.1100.10">
    <property type="match status" value="2"/>
</dbReference>
<dbReference type="Gene3D" id="6.10.140.1670">
    <property type="match status" value="1"/>
</dbReference>
<dbReference type="Gene3D" id="2.30.150.10">
    <property type="entry name" value="DNA-directed RNA polymerase, beta subunit, external 1 domain"/>
    <property type="match status" value="1"/>
</dbReference>
<dbReference type="Gene3D" id="2.40.270.10">
    <property type="entry name" value="DNA-directed RNA polymerase, subunit 2, domain 6"/>
    <property type="match status" value="1"/>
</dbReference>
<dbReference type="Gene3D" id="3.90.1800.10">
    <property type="entry name" value="RNA polymerase alpha subunit dimerisation domain"/>
    <property type="match status" value="1"/>
</dbReference>
<dbReference type="Gene3D" id="3.90.1110.10">
    <property type="entry name" value="RNA polymerase Rpb2, domain 2"/>
    <property type="match status" value="1"/>
</dbReference>
<dbReference type="HAMAP" id="MF_01321">
    <property type="entry name" value="RNApol_bact_RpoB"/>
    <property type="match status" value="1"/>
</dbReference>
<dbReference type="InterPro" id="IPR042107">
    <property type="entry name" value="DNA-dir_RNA_pol_bsu_ext_1_sf"/>
</dbReference>
<dbReference type="InterPro" id="IPR019462">
    <property type="entry name" value="DNA-dir_RNA_pol_bsu_external_1"/>
</dbReference>
<dbReference type="InterPro" id="IPR015712">
    <property type="entry name" value="DNA-dir_RNA_pol_su2"/>
</dbReference>
<dbReference type="InterPro" id="IPR007120">
    <property type="entry name" value="DNA-dir_RNAP_su2_dom"/>
</dbReference>
<dbReference type="InterPro" id="IPR037033">
    <property type="entry name" value="DNA-dir_RNAP_su2_hyb_sf"/>
</dbReference>
<dbReference type="InterPro" id="IPR010243">
    <property type="entry name" value="RNA_pol_bsu_bac"/>
</dbReference>
<dbReference type="InterPro" id="IPR007121">
    <property type="entry name" value="RNA_pol_bsu_CS"/>
</dbReference>
<dbReference type="InterPro" id="IPR007644">
    <property type="entry name" value="RNA_pol_bsu_protrusion"/>
</dbReference>
<dbReference type="InterPro" id="IPR007642">
    <property type="entry name" value="RNA_pol_Rpb2_2"/>
</dbReference>
<dbReference type="InterPro" id="IPR037034">
    <property type="entry name" value="RNA_pol_Rpb2_2_sf"/>
</dbReference>
<dbReference type="InterPro" id="IPR007645">
    <property type="entry name" value="RNA_pol_Rpb2_3"/>
</dbReference>
<dbReference type="InterPro" id="IPR007641">
    <property type="entry name" value="RNA_pol_Rpb2_7"/>
</dbReference>
<dbReference type="InterPro" id="IPR014724">
    <property type="entry name" value="RNA_pol_RPB2_OB-fold"/>
</dbReference>
<dbReference type="NCBIfam" id="NF001616">
    <property type="entry name" value="PRK00405.1"/>
    <property type="match status" value="1"/>
</dbReference>
<dbReference type="NCBIfam" id="TIGR02013">
    <property type="entry name" value="rpoB"/>
    <property type="match status" value="1"/>
</dbReference>
<dbReference type="PANTHER" id="PTHR20856">
    <property type="entry name" value="DNA-DIRECTED RNA POLYMERASE I SUBUNIT 2"/>
    <property type="match status" value="1"/>
</dbReference>
<dbReference type="Pfam" id="PF04563">
    <property type="entry name" value="RNA_pol_Rpb2_1"/>
    <property type="match status" value="1"/>
</dbReference>
<dbReference type="Pfam" id="PF04561">
    <property type="entry name" value="RNA_pol_Rpb2_2"/>
    <property type="match status" value="2"/>
</dbReference>
<dbReference type="Pfam" id="PF04565">
    <property type="entry name" value="RNA_pol_Rpb2_3"/>
    <property type="match status" value="1"/>
</dbReference>
<dbReference type="Pfam" id="PF10385">
    <property type="entry name" value="RNA_pol_Rpb2_45"/>
    <property type="match status" value="1"/>
</dbReference>
<dbReference type="Pfam" id="PF00562">
    <property type="entry name" value="RNA_pol_Rpb2_6"/>
    <property type="match status" value="1"/>
</dbReference>
<dbReference type="Pfam" id="PF04560">
    <property type="entry name" value="RNA_pol_Rpb2_7"/>
    <property type="match status" value="1"/>
</dbReference>
<dbReference type="SUPFAM" id="SSF64484">
    <property type="entry name" value="beta and beta-prime subunits of DNA dependent RNA-polymerase"/>
    <property type="match status" value="1"/>
</dbReference>
<dbReference type="PROSITE" id="PS01166">
    <property type="entry name" value="RNA_POL_BETA"/>
    <property type="match status" value="1"/>
</dbReference>
<sequence length="1342" mass="150630">MVYSYTEKKRIRKDFGKRPQVLDVPYLLSIQLDSFQKFIEQDPEGQYGLEAAFRSVFPIQSYSGNSELQYVSYRLGEPVFDVQECQIRGVTYSAPLRVKLRLVIYEREAPEGTVKDIKEQEVYMGEIPLMTDNGTFVINGTERVIVSQLHRSPGVFFDSDKGKTHSSGKVLYNARIIPYRGSWLDFEFDPKDNLFVRIDRRRKLPATIILRALNYTTEQILDLFFEKVIFEIRDNKLQMELVPERLRGETASFDIEANGKVYVEKGRRITARHIRQLEKDDVKLIEVPVEYIAGKVVAKDYIDESTGELICAANMELSLDLLAKLSQSGHKRIETLFTNDLDHGPYISETLRVDPTNDRLSALVEIYRMMRPGEPPTREAAESLFENLFFSEDRYDLSAVGRMKFNRSLLRDEIEGSGILSKDDIIDVMKKLIDIRNGKGEVDDIDHLGNRRIRSVGEMAENQFRVGLVRVERAVKERLSLGDLDTLMPQDMINAKPISAAVKEFFGSSQLSQFMDQNNPLSEITHKRRISALGPGGLTRERAGFEVRDVHPTHYGRVCPIETPEGPNIGLINSLSVYAQTNEYGFLETPYRKVIDGVVTDEIHYLSAIEEGNYVIAQANSNLDEEGHFVEDLVTCRSKGESSLFSRDQVDYMDVSTQQVVSVGASLIPFLEHDDANRALMGANMQRQAVPTLRADKPLVGTGMERAVAVDSGVTAVAKRGGVVQYVDASRIVIKVNEDEMYPGEAGIDIYNLTKYTRSNQNTCINQMPCVSLGEPVERGDVLADGPSTDLGELALGQNMRVAFMPWNGYNFEDSILVSERVVQEDRFTTIHIQELACVSRDTKLGPEEITADIPNVGEAALSKLDESGIVYIGAEVTGGDILVGKVTPKGETQLTPEEKLLRAIFGEKASDVKDSSLRVPNGVSGTVIDVQVFTRDGVEKDKRALEIEEMQLKQAKKDLSEELQILEAGLFSRIRAVLVAGGVEAEKLDKLPRDRWLELGLTDEEKQNQLEQLAEQYDELKHEFEKKLEAKRRKITQGDDLAPGVLKIVKVYLAVKRRIQPGDKMAGRHGNKGVISKINPIEDMPYDENGTPVDIVLNPLGVPSRMNIGQILETHLGMAAKGIGDKINAMLKQQQEVAKLREFIQRAYDLGADVRQKVDLSTFSDEEVMRLAENLRKGMPIATPVFDGAKEAEIKELLKLGDLPTSGQIRLYDGRTGEQFERPVTVGYMYMLKLNHLVDDKMHARSTGSYSLVTQQPLGGKAQFGGQRFGEMEVWALEAYGAAYTLQEMLTVKSDDVNGRTKMYKNIVDGNHQMEPGMPESFNVLLKEIRSLGINIELEDE</sequence>
<gene>
    <name evidence="1" type="primary">rpoB</name>
    <name type="ordered locus">EFER_3767</name>
</gene>